<organism>
    <name type="scientific">Schizosaccharomyces pombe (strain 972 / ATCC 24843)</name>
    <name type="common">Fission yeast</name>
    <dbReference type="NCBI Taxonomy" id="284812"/>
    <lineage>
        <taxon>Eukaryota</taxon>
        <taxon>Fungi</taxon>
        <taxon>Dikarya</taxon>
        <taxon>Ascomycota</taxon>
        <taxon>Taphrinomycotina</taxon>
        <taxon>Schizosaccharomycetes</taxon>
        <taxon>Schizosaccharomycetales</taxon>
        <taxon>Schizosaccharomycetaceae</taxon>
        <taxon>Schizosaccharomyces</taxon>
    </lineage>
</organism>
<comment type="function">
    <text evidence="1 3 4">ATP-dependent protein-folding chaperone for the eIF2 complex (PubMed:26211610, PubMed:35796993). Binds to the gamma subunit of the eIF2 complex which allows the subunit to assemble with the alpha and beta subunits (By similarity).</text>
</comment>
<comment type="subunit">
    <text evidence="3">Interacts with the eIF2 complex gamma subunit tif213; the interaction is direct.</text>
</comment>
<comment type="interaction">
    <interactant intactId="EBI-16165908">
        <id>Q9P7N5</id>
    </interactant>
    <interactant intactId="EBI-8924">
        <id>P32481</id>
        <label>GCD11</label>
    </interactant>
    <organismsDiffer>true</organismsDiffer>
    <experiments>4</experiments>
</comment>
<comment type="subcellular location">
    <subcellularLocation>
        <location evidence="2">Cytoplasm</location>
    </subcellularLocation>
</comment>
<comment type="disruption phenotype">
    <text evidence="3">Inviable.</text>
</comment>
<comment type="similarity">
    <text evidence="5">Belongs to the CDC123 family.</text>
</comment>
<evidence type="ECO:0000250" key="1">
    <source>
        <dbReference type="UniProtKB" id="Q05791"/>
    </source>
</evidence>
<evidence type="ECO:0000269" key="2">
    <source>
    </source>
</evidence>
<evidence type="ECO:0000269" key="3">
    <source>
    </source>
</evidence>
<evidence type="ECO:0000269" key="4">
    <source>
    </source>
</evidence>
<evidence type="ECO:0000305" key="5"/>
<evidence type="ECO:0000305" key="6">
    <source>
    </source>
</evidence>
<evidence type="ECO:0007744" key="7">
    <source>
        <dbReference type="PDB" id="4ZGN"/>
    </source>
</evidence>
<evidence type="ECO:0007744" key="8">
    <source>
        <dbReference type="PDB" id="4ZGO"/>
    </source>
</evidence>
<evidence type="ECO:0007744" key="9">
    <source>
        <dbReference type="PDB" id="4ZGP"/>
    </source>
</evidence>
<evidence type="ECO:0007744" key="10">
    <source>
        <dbReference type="PDB" id="4ZGQ"/>
    </source>
</evidence>
<evidence type="ECO:0007829" key="11">
    <source>
        <dbReference type="PDB" id="4ZGN"/>
    </source>
</evidence>
<evidence type="ECO:0007829" key="12">
    <source>
        <dbReference type="PDB" id="4ZGP"/>
    </source>
</evidence>
<keyword id="KW-0002">3D-structure</keyword>
<keyword id="KW-0067">ATP-binding</keyword>
<keyword id="KW-0143">Chaperone</keyword>
<keyword id="KW-0963">Cytoplasm</keyword>
<keyword id="KW-0460">Magnesium</keyword>
<keyword id="KW-0479">Metal-binding</keyword>
<keyword id="KW-0547">Nucleotide-binding</keyword>
<keyword id="KW-1185">Reference proteome</keyword>
<feature type="chain" id="PRO_0000350948" description="Translation initiation factor eIF2 assembly protein">
    <location>
        <begin position="1"/>
        <end position="319"/>
    </location>
</feature>
<feature type="binding site" evidence="7">
    <location>
        <position position="96"/>
    </location>
    <ligand>
        <name>ATP</name>
        <dbReference type="ChEBI" id="CHEBI:30616"/>
    </ligand>
</feature>
<feature type="binding site" evidence="7">
    <location>
        <position position="99"/>
    </location>
    <ligand>
        <name>ATP</name>
        <dbReference type="ChEBI" id="CHEBI:30616"/>
    </ligand>
</feature>
<feature type="binding site" evidence="7 9">
    <location>
        <position position="101"/>
    </location>
    <ligand>
        <name>ATP</name>
        <dbReference type="ChEBI" id="CHEBI:30616"/>
    </ligand>
</feature>
<feature type="binding site" evidence="7 9">
    <location>
        <position position="103"/>
    </location>
    <ligand>
        <name>ATP</name>
        <dbReference type="ChEBI" id="CHEBI:30616"/>
    </ligand>
</feature>
<feature type="binding site" evidence="7 9">
    <location>
        <position position="164"/>
    </location>
    <ligand>
        <name>ATP</name>
        <dbReference type="ChEBI" id="CHEBI:30616"/>
    </ligand>
</feature>
<feature type="binding site" evidence="7 9">
    <location>
        <position position="165"/>
    </location>
    <ligand>
        <name>ATP</name>
        <dbReference type="ChEBI" id="CHEBI:30616"/>
    </ligand>
</feature>
<feature type="binding site" evidence="7">
    <location>
        <position position="166"/>
    </location>
    <ligand>
        <name>ATP</name>
        <dbReference type="ChEBI" id="CHEBI:30616"/>
    </ligand>
</feature>
<feature type="binding site" evidence="7 9">
    <location>
        <position position="167"/>
    </location>
    <ligand>
        <name>ATP</name>
        <dbReference type="ChEBI" id="CHEBI:30616"/>
    </ligand>
</feature>
<feature type="binding site" evidence="7 9">
    <location>
        <position position="174"/>
    </location>
    <ligand>
        <name>ATP</name>
        <dbReference type="ChEBI" id="CHEBI:30616"/>
    </ligand>
</feature>
<feature type="binding site" evidence="7">
    <location>
        <position position="176"/>
    </location>
    <ligand>
        <name>ATP</name>
        <dbReference type="ChEBI" id="CHEBI:30616"/>
    </ligand>
</feature>
<feature type="binding site" evidence="7 9">
    <location>
        <position position="190"/>
    </location>
    <ligand>
        <name>ATP</name>
        <dbReference type="ChEBI" id="CHEBI:30616"/>
    </ligand>
</feature>
<feature type="binding site" evidence="9">
    <location>
        <position position="227"/>
    </location>
    <ligand>
        <name>ATP</name>
        <dbReference type="ChEBI" id="CHEBI:30616"/>
    </ligand>
</feature>
<feature type="binding site" evidence="7 9">
    <location>
        <position position="239"/>
    </location>
    <ligand>
        <name>ATP</name>
        <dbReference type="ChEBI" id="CHEBI:30616"/>
    </ligand>
</feature>
<feature type="binding site" evidence="6">
    <location>
        <position position="239"/>
    </location>
    <ligand>
        <name>Mg(2+)</name>
        <dbReference type="ChEBI" id="CHEBI:18420"/>
    </ligand>
</feature>
<feature type="binding site" evidence="7">
    <location>
        <position position="241"/>
    </location>
    <ligand>
        <name>ATP</name>
        <dbReference type="ChEBI" id="CHEBI:30616"/>
    </ligand>
</feature>
<feature type="binding site" evidence="6">
    <location>
        <position position="241"/>
    </location>
    <ligand>
        <name>Mg(2+)</name>
        <dbReference type="ChEBI" id="CHEBI:18420"/>
    </ligand>
</feature>
<feature type="helix" evidence="12">
    <location>
        <begin position="7"/>
        <end position="12"/>
    </location>
</feature>
<feature type="helix" evidence="12">
    <location>
        <begin position="15"/>
        <end position="21"/>
    </location>
</feature>
<feature type="helix" evidence="12">
    <location>
        <begin position="23"/>
        <end position="25"/>
    </location>
</feature>
<feature type="strand" evidence="12">
    <location>
        <begin position="29"/>
        <end position="34"/>
    </location>
</feature>
<feature type="helix" evidence="12">
    <location>
        <begin position="37"/>
        <end position="43"/>
    </location>
</feature>
<feature type="strand" evidence="11">
    <location>
        <begin position="45"/>
        <end position="47"/>
    </location>
</feature>
<feature type="helix" evidence="12">
    <location>
        <begin position="76"/>
        <end position="88"/>
    </location>
</feature>
<feature type="strand" evidence="12">
    <location>
        <begin position="93"/>
        <end position="96"/>
    </location>
</feature>
<feature type="helix" evidence="12">
    <location>
        <begin position="103"/>
        <end position="108"/>
    </location>
</feature>
<feature type="strand" evidence="12">
    <location>
        <begin position="109"/>
        <end position="114"/>
    </location>
</feature>
<feature type="strand" evidence="11">
    <location>
        <begin position="116"/>
        <end position="118"/>
    </location>
</feature>
<feature type="helix" evidence="12">
    <location>
        <begin position="119"/>
        <end position="127"/>
    </location>
</feature>
<feature type="helix" evidence="12">
    <location>
        <begin position="130"/>
        <end position="138"/>
    </location>
</feature>
<feature type="turn" evidence="12">
    <location>
        <begin position="139"/>
        <end position="142"/>
    </location>
</feature>
<feature type="strand" evidence="12">
    <location>
        <begin position="161"/>
        <end position="165"/>
    </location>
</feature>
<feature type="helix" evidence="12">
    <location>
        <begin position="171"/>
        <end position="173"/>
    </location>
</feature>
<feature type="strand" evidence="12">
    <location>
        <begin position="174"/>
        <end position="180"/>
    </location>
</feature>
<feature type="strand" evidence="12">
    <location>
        <begin position="183"/>
        <end position="193"/>
    </location>
</feature>
<feature type="helix" evidence="12">
    <location>
        <begin position="197"/>
        <end position="200"/>
    </location>
</feature>
<feature type="helix" evidence="12">
    <location>
        <begin position="202"/>
        <end position="214"/>
    </location>
</feature>
<feature type="turn" evidence="12">
    <location>
        <begin position="215"/>
        <end position="218"/>
    </location>
</feature>
<feature type="strand" evidence="12">
    <location>
        <begin position="222"/>
        <end position="231"/>
    </location>
</feature>
<feature type="strand" evidence="12">
    <location>
        <begin position="234"/>
        <end position="244"/>
    </location>
</feature>
<feature type="helix" evidence="12">
    <location>
        <begin position="254"/>
        <end position="259"/>
    </location>
</feature>
<feature type="strand" evidence="12">
    <location>
        <begin position="268"/>
        <end position="270"/>
    </location>
</feature>
<feature type="helix" evidence="11">
    <location>
        <begin position="299"/>
        <end position="308"/>
    </location>
</feature>
<feature type="turn" evidence="11">
    <location>
        <begin position="309"/>
        <end position="314"/>
    </location>
</feature>
<accession>Q9P7N5</accession>
<dbReference type="EMBL" id="CU329670">
    <property type="protein sequence ID" value="CAB76024.1"/>
    <property type="molecule type" value="Genomic_DNA"/>
</dbReference>
<dbReference type="RefSeq" id="NP_593407.1">
    <property type="nucleotide sequence ID" value="NM_001018840.2"/>
</dbReference>
<dbReference type="PDB" id="4ZGN">
    <property type="method" value="X-ray"/>
    <property type="resolution" value="2.90 A"/>
    <property type="chains" value="A=1-319"/>
</dbReference>
<dbReference type="PDB" id="4ZGO">
    <property type="method" value="X-ray"/>
    <property type="resolution" value="2.06 A"/>
    <property type="chains" value="A/B=1-319"/>
</dbReference>
<dbReference type="PDB" id="4ZGP">
    <property type="method" value="X-ray"/>
    <property type="resolution" value="1.85 A"/>
    <property type="chains" value="A/B=1-274"/>
</dbReference>
<dbReference type="PDB" id="4ZGQ">
    <property type="method" value="X-ray"/>
    <property type="resolution" value="3.00 A"/>
    <property type="chains" value="A=1-319"/>
</dbReference>
<dbReference type="PDBsum" id="4ZGN"/>
<dbReference type="PDBsum" id="4ZGO"/>
<dbReference type="PDBsum" id="4ZGP"/>
<dbReference type="PDBsum" id="4ZGQ"/>
<dbReference type="SMR" id="Q9P7N5"/>
<dbReference type="BioGRID" id="278360">
    <property type="interactions" value="1"/>
</dbReference>
<dbReference type="DIP" id="DIP-61798N"/>
<dbReference type="FunCoup" id="Q9P7N5">
    <property type="interactions" value="687"/>
</dbReference>
<dbReference type="IntAct" id="Q9P7N5">
    <property type="interactions" value="1"/>
</dbReference>
<dbReference type="STRING" id="284812.Q9P7N5"/>
<dbReference type="iPTMnet" id="Q9P7N5"/>
<dbReference type="SwissPalm" id="Q9P7N5"/>
<dbReference type="PaxDb" id="4896-SPAP27G11.03.1"/>
<dbReference type="EnsemblFungi" id="SPAP27G11.03.1">
    <property type="protein sequence ID" value="SPAP27G11.03.1:pep"/>
    <property type="gene ID" value="SPAP27G11.03"/>
</dbReference>
<dbReference type="GeneID" id="2541870"/>
<dbReference type="KEGG" id="spo:2541870"/>
<dbReference type="PomBase" id="SPAP27G11.03">
    <property type="gene designation" value="cdc123"/>
</dbReference>
<dbReference type="VEuPathDB" id="FungiDB:SPAP27G11.03"/>
<dbReference type="eggNOG" id="KOG2983">
    <property type="taxonomic scope" value="Eukaryota"/>
</dbReference>
<dbReference type="HOGENOM" id="CLU_034402_2_0_1"/>
<dbReference type="InParanoid" id="Q9P7N5"/>
<dbReference type="OMA" id="SGVIMEM"/>
<dbReference type="PhylomeDB" id="Q9P7N5"/>
<dbReference type="EvolutionaryTrace" id="Q9P7N5"/>
<dbReference type="PRO" id="PR:Q9P7N5"/>
<dbReference type="Proteomes" id="UP000002485">
    <property type="component" value="Chromosome I"/>
</dbReference>
<dbReference type="GO" id="GO:0005737">
    <property type="term" value="C:cytoplasm"/>
    <property type="evidence" value="ECO:0000318"/>
    <property type="project" value="GO_Central"/>
</dbReference>
<dbReference type="GO" id="GO:0005829">
    <property type="term" value="C:cytosol"/>
    <property type="evidence" value="ECO:0007005"/>
    <property type="project" value="PomBase"/>
</dbReference>
<dbReference type="GO" id="GO:0005524">
    <property type="term" value="F:ATP binding"/>
    <property type="evidence" value="ECO:0000314"/>
    <property type="project" value="UniProtKB"/>
</dbReference>
<dbReference type="GO" id="GO:0000287">
    <property type="term" value="F:magnesium ion binding"/>
    <property type="evidence" value="ECO:0000314"/>
    <property type="project" value="UniProtKB"/>
</dbReference>
<dbReference type="GO" id="GO:0044183">
    <property type="term" value="F:protein folding chaperone"/>
    <property type="evidence" value="ECO:0000250"/>
    <property type="project" value="UniProtKB"/>
</dbReference>
<dbReference type="GO" id="GO:1905143">
    <property type="term" value="P:eukaryotic translation initiation factor 2 complex assembly"/>
    <property type="evidence" value="ECO:0000250"/>
    <property type="project" value="UniProtKB"/>
</dbReference>
<dbReference type="InterPro" id="IPR009772">
    <property type="entry name" value="CDC123"/>
</dbReference>
<dbReference type="PANTHER" id="PTHR15323:SF6">
    <property type="entry name" value="CELL DIVISION CYCLE PROTEIN 123 HOMOLOG"/>
    <property type="match status" value="1"/>
</dbReference>
<dbReference type="PANTHER" id="PTHR15323">
    <property type="entry name" value="D123 PROTEIN"/>
    <property type="match status" value="1"/>
</dbReference>
<dbReference type="Pfam" id="PF07065">
    <property type="entry name" value="D123"/>
    <property type="match status" value="1"/>
</dbReference>
<name>CD123_SCHPO</name>
<sequence>MTLILTKNQVLHCQFSSWYSLFRKLTPKAKVIKPIPATVLKYLHEDSIYVEQPMNTVEEVDSEEDEESAPAYYPEREAIQLIEKAIKELGGAVVPKLNWSTPKDALWITTTGSLKCTTAEEVLLLLKSSDFVAHDLNHAFDDCKDFDNADGSVPKDFSFELVLKEWFPMHASTEFRCFVKSKRLIAFCQRDDNYYEFLKENIDCYEKLISDLLKKLDTFPDPDFVFDVYIHKDRAWLIDINPFYPRTDGLLFSWSELESMNSENMKPEIRLIPKGSMPSTGSAKYYTNRVPFDMIAASEGENLLEFAQKWQDLTNKSNE</sequence>
<reference key="1">
    <citation type="journal article" date="2002" name="Nature">
        <title>The genome sequence of Schizosaccharomyces pombe.</title>
        <authorList>
            <person name="Wood V."/>
            <person name="Gwilliam R."/>
            <person name="Rajandream M.A."/>
            <person name="Lyne M.H."/>
            <person name="Lyne R."/>
            <person name="Stewart A."/>
            <person name="Sgouros J.G."/>
            <person name="Peat N."/>
            <person name="Hayles J."/>
            <person name="Baker S.G."/>
            <person name="Basham D."/>
            <person name="Bowman S."/>
            <person name="Brooks K."/>
            <person name="Brown D."/>
            <person name="Brown S."/>
            <person name="Chillingworth T."/>
            <person name="Churcher C.M."/>
            <person name="Collins M."/>
            <person name="Connor R."/>
            <person name="Cronin A."/>
            <person name="Davis P."/>
            <person name="Feltwell T."/>
            <person name="Fraser A."/>
            <person name="Gentles S."/>
            <person name="Goble A."/>
            <person name="Hamlin N."/>
            <person name="Harris D.E."/>
            <person name="Hidalgo J."/>
            <person name="Hodgson G."/>
            <person name="Holroyd S."/>
            <person name="Hornsby T."/>
            <person name="Howarth S."/>
            <person name="Huckle E.J."/>
            <person name="Hunt S."/>
            <person name="Jagels K."/>
            <person name="James K.D."/>
            <person name="Jones L."/>
            <person name="Jones M."/>
            <person name="Leather S."/>
            <person name="McDonald S."/>
            <person name="McLean J."/>
            <person name="Mooney P."/>
            <person name="Moule S."/>
            <person name="Mungall K.L."/>
            <person name="Murphy L.D."/>
            <person name="Niblett D."/>
            <person name="Odell C."/>
            <person name="Oliver K."/>
            <person name="O'Neil S."/>
            <person name="Pearson D."/>
            <person name="Quail M.A."/>
            <person name="Rabbinowitsch E."/>
            <person name="Rutherford K.M."/>
            <person name="Rutter S."/>
            <person name="Saunders D."/>
            <person name="Seeger K."/>
            <person name="Sharp S."/>
            <person name="Skelton J."/>
            <person name="Simmonds M.N."/>
            <person name="Squares R."/>
            <person name="Squares S."/>
            <person name="Stevens K."/>
            <person name="Taylor K."/>
            <person name="Taylor R.G."/>
            <person name="Tivey A."/>
            <person name="Walsh S.V."/>
            <person name="Warren T."/>
            <person name="Whitehead S."/>
            <person name="Woodward J.R."/>
            <person name="Volckaert G."/>
            <person name="Aert R."/>
            <person name="Robben J."/>
            <person name="Grymonprez B."/>
            <person name="Weltjens I."/>
            <person name="Vanstreels E."/>
            <person name="Rieger M."/>
            <person name="Schaefer M."/>
            <person name="Mueller-Auer S."/>
            <person name="Gabel C."/>
            <person name="Fuchs M."/>
            <person name="Duesterhoeft A."/>
            <person name="Fritzc C."/>
            <person name="Holzer E."/>
            <person name="Moestl D."/>
            <person name="Hilbert H."/>
            <person name="Borzym K."/>
            <person name="Langer I."/>
            <person name="Beck A."/>
            <person name="Lehrach H."/>
            <person name="Reinhardt R."/>
            <person name="Pohl T.M."/>
            <person name="Eger P."/>
            <person name="Zimmermann W."/>
            <person name="Wedler H."/>
            <person name="Wambutt R."/>
            <person name="Purnelle B."/>
            <person name="Goffeau A."/>
            <person name="Cadieu E."/>
            <person name="Dreano S."/>
            <person name="Gloux S."/>
            <person name="Lelaure V."/>
            <person name="Mottier S."/>
            <person name="Galibert F."/>
            <person name="Aves S.J."/>
            <person name="Xiang Z."/>
            <person name="Hunt C."/>
            <person name="Moore K."/>
            <person name="Hurst S.M."/>
            <person name="Lucas M."/>
            <person name="Rochet M."/>
            <person name="Gaillardin C."/>
            <person name="Tallada V.A."/>
            <person name="Garzon A."/>
            <person name="Thode G."/>
            <person name="Daga R.R."/>
            <person name="Cruzado L."/>
            <person name="Jimenez J."/>
            <person name="Sanchez M."/>
            <person name="del Rey F."/>
            <person name="Benito J."/>
            <person name="Dominguez A."/>
            <person name="Revuelta J.L."/>
            <person name="Moreno S."/>
            <person name="Armstrong J."/>
            <person name="Forsburg S.L."/>
            <person name="Cerutti L."/>
            <person name="Lowe T."/>
            <person name="McCombie W.R."/>
            <person name="Paulsen I."/>
            <person name="Potashkin J."/>
            <person name="Shpakovski G.V."/>
            <person name="Ussery D."/>
            <person name="Barrell B.G."/>
            <person name="Nurse P."/>
        </authorList>
    </citation>
    <scope>NUCLEOTIDE SEQUENCE [LARGE SCALE GENOMIC DNA]</scope>
    <source>
        <strain>972 / ATCC 24843</strain>
    </source>
</reference>
<reference key="2">
    <citation type="journal article" date="2006" name="Nat. Biotechnol.">
        <title>ORFeome cloning and global analysis of protein localization in the fission yeast Schizosaccharomyces pombe.</title>
        <authorList>
            <person name="Matsuyama A."/>
            <person name="Arai R."/>
            <person name="Yashiroda Y."/>
            <person name="Shirai A."/>
            <person name="Kamata A."/>
            <person name="Sekido S."/>
            <person name="Kobayashi Y."/>
            <person name="Hashimoto A."/>
            <person name="Hamamoto M."/>
            <person name="Hiraoka Y."/>
            <person name="Horinouchi S."/>
            <person name="Yoshida M."/>
        </authorList>
    </citation>
    <scope>SUBCELLULAR LOCATION [LARGE SCALE ANALYSIS]</scope>
</reference>
<reference key="3">
    <citation type="journal article" date="2022" name="Methods Mol. Biol.">
        <title>Thermofluor-Based Analysis of Protein Integrity and Ligand Interactions.</title>
        <authorList>
            <person name="Pinz S."/>
            <person name="Doskocil E."/>
            <person name="Seufert W."/>
        </authorList>
    </citation>
    <scope>FUNCTION</scope>
</reference>
<reference evidence="7 8 9 10" key="4">
    <citation type="journal article" date="2015" name="Structure">
        <title>Cdc123, a cell cycle regulator needed for eIF2 assembly, is an ATP-grasp protein with unique features.</title>
        <authorList>
            <person name="Panvert M."/>
            <person name="Dubiez E."/>
            <person name="Arnold L."/>
            <person name="Perez J."/>
            <person name="Mechulam Y."/>
            <person name="Seufert W."/>
            <person name="Schmitt E."/>
        </authorList>
    </citation>
    <scope>X-RAY CRYSTALLOGRAPHY (1.85 ANGSTROMS) IN COMPLEX WITH ATP AND MAGNESIUM</scope>
    <scope>FUNCTION</scope>
    <scope>INTERACTION WITH TIF213</scope>
    <scope>DISRUPTION PHENOTYPE</scope>
    <scope>ATP-BINDING</scope>
    <scope>MAGNESIUM BINDING</scope>
</reference>
<proteinExistence type="evidence at protein level"/>
<protein>
    <recommendedName>
        <fullName evidence="5">Translation initiation factor eIF2 assembly protein</fullName>
    </recommendedName>
    <alternativeName>
        <fullName>Cell division cycle protein 123</fullName>
    </alternativeName>
</protein>
<gene>
    <name type="primary">cdc123</name>
    <name type="ORF">SPAP27G11.03</name>
</gene>